<feature type="chain" id="PRO_0000308147" description="Large ribosomal subunit protein uL1">
    <location>
        <begin position="1"/>
        <end position="213"/>
    </location>
</feature>
<gene>
    <name evidence="1" type="primary">rpl1</name>
    <name type="ordered locus">Memar_0413</name>
</gene>
<evidence type="ECO:0000255" key="1">
    <source>
        <dbReference type="HAMAP-Rule" id="MF_01318"/>
    </source>
</evidence>
<evidence type="ECO:0000305" key="2"/>
<sequence length="213" mass="23724">MVDKTSIQEAVKTALSKAPERKFKESVDITVNLRNIDMSQPKNRIDETIHLPNGFDNVKIAVLGKGDIVTQAKEVNVDLIIGPEEIERLGGEPREARKVAGEYRFFLAETAMMPLVGRYLGVRLGPRGRMPMPVPQGMDIRPIVQRLRSSVKIRTKDKKVFHTKVGTSGMEPEQIAENIDAVLHRVESVLESGTMNIHSVYVKTTMGPAVRVI</sequence>
<organism>
    <name type="scientific">Methanoculleus marisnigri (strain ATCC 35101 / DSM 1498 / JR1)</name>
    <dbReference type="NCBI Taxonomy" id="368407"/>
    <lineage>
        <taxon>Archaea</taxon>
        <taxon>Methanobacteriati</taxon>
        <taxon>Methanobacteriota</taxon>
        <taxon>Stenosarchaea group</taxon>
        <taxon>Methanomicrobia</taxon>
        <taxon>Methanomicrobiales</taxon>
        <taxon>Methanomicrobiaceae</taxon>
        <taxon>Methanoculleus</taxon>
    </lineage>
</organism>
<protein>
    <recommendedName>
        <fullName evidence="1">Large ribosomal subunit protein uL1</fullName>
    </recommendedName>
    <alternativeName>
        <fullName evidence="2">50S ribosomal protein L1</fullName>
    </alternativeName>
</protein>
<dbReference type="EMBL" id="CP000562">
    <property type="protein sequence ID" value="ABN56346.1"/>
    <property type="molecule type" value="Genomic_DNA"/>
</dbReference>
<dbReference type="RefSeq" id="WP_011843256.1">
    <property type="nucleotide sequence ID" value="NC_009051.1"/>
</dbReference>
<dbReference type="SMR" id="A3CSJ6"/>
<dbReference type="STRING" id="368407.Memar_0413"/>
<dbReference type="GeneID" id="4848417"/>
<dbReference type="KEGG" id="mem:Memar_0413"/>
<dbReference type="eggNOG" id="arCOG04289">
    <property type="taxonomic scope" value="Archaea"/>
</dbReference>
<dbReference type="HOGENOM" id="CLU_062853_4_0_2"/>
<dbReference type="OrthoDB" id="10382at2157"/>
<dbReference type="Proteomes" id="UP000002146">
    <property type="component" value="Chromosome"/>
</dbReference>
<dbReference type="GO" id="GO:0015934">
    <property type="term" value="C:large ribosomal subunit"/>
    <property type="evidence" value="ECO:0007669"/>
    <property type="project" value="InterPro"/>
</dbReference>
<dbReference type="GO" id="GO:0019843">
    <property type="term" value="F:rRNA binding"/>
    <property type="evidence" value="ECO:0007669"/>
    <property type="project" value="UniProtKB-UniRule"/>
</dbReference>
<dbReference type="GO" id="GO:0003735">
    <property type="term" value="F:structural constituent of ribosome"/>
    <property type="evidence" value="ECO:0007669"/>
    <property type="project" value="InterPro"/>
</dbReference>
<dbReference type="GO" id="GO:0000049">
    <property type="term" value="F:tRNA binding"/>
    <property type="evidence" value="ECO:0007669"/>
    <property type="project" value="UniProtKB-KW"/>
</dbReference>
<dbReference type="GO" id="GO:0006417">
    <property type="term" value="P:regulation of translation"/>
    <property type="evidence" value="ECO:0007669"/>
    <property type="project" value="UniProtKB-KW"/>
</dbReference>
<dbReference type="GO" id="GO:0006412">
    <property type="term" value="P:translation"/>
    <property type="evidence" value="ECO:0007669"/>
    <property type="project" value="UniProtKB-UniRule"/>
</dbReference>
<dbReference type="CDD" id="cd00403">
    <property type="entry name" value="Ribosomal_L1"/>
    <property type="match status" value="1"/>
</dbReference>
<dbReference type="FunFam" id="3.40.50.790:FF:000005">
    <property type="entry name" value="50S ribosomal protein L1"/>
    <property type="match status" value="1"/>
</dbReference>
<dbReference type="Gene3D" id="3.30.190.20">
    <property type="match status" value="1"/>
</dbReference>
<dbReference type="Gene3D" id="3.40.50.790">
    <property type="match status" value="1"/>
</dbReference>
<dbReference type="HAMAP" id="MF_01318_A">
    <property type="entry name" value="Ribosomal_uL1_A"/>
    <property type="match status" value="1"/>
</dbReference>
<dbReference type="InterPro" id="IPR002143">
    <property type="entry name" value="Ribosomal_uL1"/>
</dbReference>
<dbReference type="InterPro" id="IPR023674">
    <property type="entry name" value="Ribosomal_uL1-like"/>
</dbReference>
<dbReference type="InterPro" id="IPR028364">
    <property type="entry name" value="Ribosomal_uL1/biogenesis"/>
</dbReference>
<dbReference type="InterPro" id="IPR016095">
    <property type="entry name" value="Ribosomal_uL1_3-a/b-sand"/>
</dbReference>
<dbReference type="InterPro" id="IPR023669">
    <property type="entry name" value="Ribosomal_uL1_arc"/>
</dbReference>
<dbReference type="NCBIfam" id="NF003244">
    <property type="entry name" value="PRK04203.1"/>
    <property type="match status" value="1"/>
</dbReference>
<dbReference type="PANTHER" id="PTHR36427">
    <property type="entry name" value="54S RIBOSOMAL PROTEIN L1, MITOCHONDRIAL"/>
    <property type="match status" value="1"/>
</dbReference>
<dbReference type="PANTHER" id="PTHR36427:SF3">
    <property type="entry name" value="LARGE RIBOSOMAL SUBUNIT PROTEIN UL1M"/>
    <property type="match status" value="1"/>
</dbReference>
<dbReference type="Pfam" id="PF00687">
    <property type="entry name" value="Ribosomal_L1"/>
    <property type="match status" value="1"/>
</dbReference>
<dbReference type="PIRSF" id="PIRSF002155">
    <property type="entry name" value="Ribosomal_L1"/>
    <property type="match status" value="1"/>
</dbReference>
<dbReference type="SUPFAM" id="SSF56808">
    <property type="entry name" value="Ribosomal protein L1"/>
    <property type="match status" value="1"/>
</dbReference>
<accession>A3CSJ6</accession>
<name>RL1_METMJ</name>
<keyword id="KW-0678">Repressor</keyword>
<keyword id="KW-0687">Ribonucleoprotein</keyword>
<keyword id="KW-0689">Ribosomal protein</keyword>
<keyword id="KW-0694">RNA-binding</keyword>
<keyword id="KW-0699">rRNA-binding</keyword>
<keyword id="KW-0810">Translation regulation</keyword>
<keyword id="KW-0820">tRNA-binding</keyword>
<comment type="function">
    <text evidence="1">Binds directly to 23S rRNA. Probably involved in E site tRNA release.</text>
</comment>
<comment type="function">
    <text evidence="1">Protein L1 is also a translational repressor protein, it controls the translation of its operon by binding to its mRNA.</text>
</comment>
<comment type="subunit">
    <text evidence="1">Part of the 50S ribosomal subunit.</text>
</comment>
<comment type="similarity">
    <text evidence="1">Belongs to the universal ribosomal protein uL1 family.</text>
</comment>
<reference key="1">
    <citation type="journal article" date="2009" name="Stand. Genomic Sci.">
        <title>Complete genome sequence of Methanoculleus marisnigri Romesser et al. 1981 type strain JR1.</title>
        <authorList>
            <person name="Anderson I.J."/>
            <person name="Sieprawska-Lupa M."/>
            <person name="Lapidus A."/>
            <person name="Nolan M."/>
            <person name="Copeland A."/>
            <person name="Glavina Del Rio T."/>
            <person name="Tice H."/>
            <person name="Dalin E."/>
            <person name="Barry K."/>
            <person name="Saunders E."/>
            <person name="Han C."/>
            <person name="Brettin T."/>
            <person name="Detter J.C."/>
            <person name="Bruce D."/>
            <person name="Mikhailova N."/>
            <person name="Pitluck S."/>
            <person name="Hauser L."/>
            <person name="Land M."/>
            <person name="Lucas S."/>
            <person name="Richardson P."/>
            <person name="Whitman W.B."/>
            <person name="Kyrpides N.C."/>
        </authorList>
    </citation>
    <scope>NUCLEOTIDE SEQUENCE [LARGE SCALE GENOMIC DNA]</scope>
    <source>
        <strain>ATCC 35101 / DSM 1498 / JR1</strain>
    </source>
</reference>
<proteinExistence type="inferred from homology"/>